<name>HCHA_ECOL5</name>
<sequence length="283" mass="31236">MTVQTSKNPQVDIAEDNAFFPSEYSLSQYTSPVSDLDGVDYPKPYRGKHKILVIAADERYLPTDNGKLFSTGNHPIETLLPLYHLHAAGFEFEVATISGLMTKFEYWAMPHKDEKVMPFFEQHKSLFRNPKKLADVVASLNADSEYAAIFVPGGHGALIGLPESQDVAAALQWAIKNDRFVISLCHGPAAFLALRHSDNPLNGYSICAFPDAADKQTPDIGYMPGHLTWYFGEELKKMGMNIINDDITGRVHKDRKLLTGDSPFAANALGKLAAQEMLAAYAS</sequence>
<proteinExistence type="inferred from homology"/>
<protein>
    <recommendedName>
        <fullName evidence="1">Protein/nucleic acid deglycase HchA</fullName>
        <ecNumber evidence="1">3.1.2.-</ecNumber>
        <ecNumber evidence="1">3.5.1.-</ecNumber>
        <ecNumber evidence="1">3.5.1.124</ecNumber>
    </recommendedName>
    <alternativeName>
        <fullName evidence="1">Maillard deglycase</fullName>
    </alternativeName>
</protein>
<organism>
    <name type="scientific">Escherichia coli O6:K15:H31 (strain 536 / UPEC)</name>
    <dbReference type="NCBI Taxonomy" id="362663"/>
    <lineage>
        <taxon>Bacteria</taxon>
        <taxon>Pseudomonadati</taxon>
        <taxon>Pseudomonadota</taxon>
        <taxon>Gammaproteobacteria</taxon>
        <taxon>Enterobacterales</taxon>
        <taxon>Enterobacteriaceae</taxon>
        <taxon>Escherichia</taxon>
    </lineage>
</organism>
<gene>
    <name evidence="1" type="primary">hchA</name>
    <name type="ordered locus">ECP_1900</name>
</gene>
<comment type="function">
    <text evidence="1">Protein and nucleotide deglycase that catalyzes the deglycation of the Maillard adducts formed between amino groups of proteins or nucleotides and reactive carbonyl groups of glyoxals. Thus, functions as a protein deglycase that repairs methylglyoxal- and glyoxal-glycated proteins, and releases repaired proteins and lactate or glycolate, respectively. Deglycates cysteine, arginine and lysine residues in proteins, and thus reactivates these proteins by reversing glycation by glyoxals. Acts on early glycation intermediates (hemithioacetals and aminocarbinols), preventing the formation of Schiff bases and advanced glycation endproducts (AGE). Also functions as a nucleotide deglycase able to repair glycated guanine in the free nucleotide pool (GTP, GDP, GMP, dGTP) and in DNA and RNA. Is thus involved in a major nucleotide repair system named guanine glycation repair (GG repair), dedicated to reversing methylglyoxal and glyoxal damage via nucleotide sanitization and direct nucleic acid repair. Plays an important role in protecting cells from carbonyl stress.</text>
</comment>
<comment type="catalytic activity">
    <reaction evidence="1">
        <text>N(omega)-(1-hydroxy-2-oxopropyl)-L-arginyl-[protein] + H2O = lactate + L-arginyl-[protein] + H(+)</text>
        <dbReference type="Rhea" id="RHEA:49548"/>
        <dbReference type="Rhea" id="RHEA-COMP:10532"/>
        <dbReference type="Rhea" id="RHEA-COMP:12428"/>
        <dbReference type="ChEBI" id="CHEBI:15377"/>
        <dbReference type="ChEBI" id="CHEBI:15378"/>
        <dbReference type="ChEBI" id="CHEBI:24996"/>
        <dbReference type="ChEBI" id="CHEBI:29965"/>
        <dbReference type="ChEBI" id="CHEBI:131708"/>
        <dbReference type="EC" id="3.5.1.124"/>
    </reaction>
</comment>
<comment type="catalytic activity">
    <reaction evidence="1">
        <text>N(6)-(1-hydroxy-2-oxopropyl)-L-lysyl-[protein] + H2O = lactate + L-lysyl-[protein] + H(+)</text>
        <dbReference type="Rhea" id="RHEA:49552"/>
        <dbReference type="Rhea" id="RHEA-COMP:9752"/>
        <dbReference type="Rhea" id="RHEA-COMP:12429"/>
        <dbReference type="ChEBI" id="CHEBI:15377"/>
        <dbReference type="ChEBI" id="CHEBI:15378"/>
        <dbReference type="ChEBI" id="CHEBI:24996"/>
        <dbReference type="ChEBI" id="CHEBI:29969"/>
        <dbReference type="ChEBI" id="CHEBI:131709"/>
        <dbReference type="EC" id="3.5.1.124"/>
    </reaction>
</comment>
<comment type="catalytic activity">
    <reaction evidence="1">
        <text>S-(1-hydroxy-2-oxopropyl)-L-cysteinyl-[protein] + H2O = lactate + L-cysteinyl-[protein] + H(+)</text>
        <dbReference type="Rhea" id="RHEA:49556"/>
        <dbReference type="Rhea" id="RHEA-COMP:10131"/>
        <dbReference type="Rhea" id="RHEA-COMP:12430"/>
        <dbReference type="ChEBI" id="CHEBI:15377"/>
        <dbReference type="ChEBI" id="CHEBI:15378"/>
        <dbReference type="ChEBI" id="CHEBI:24996"/>
        <dbReference type="ChEBI" id="CHEBI:29950"/>
        <dbReference type="ChEBI" id="CHEBI:131710"/>
        <dbReference type="EC" id="3.5.1.124"/>
    </reaction>
</comment>
<comment type="catalytic activity">
    <reaction evidence="1">
        <text>N(omega)-(1-hydroxy-2-oxoethyl)-L-arginyl-[protein] + H2O = L-arginyl-[protein] + glycolate + H(+)</text>
        <dbReference type="Rhea" id="RHEA:57188"/>
        <dbReference type="Rhea" id="RHEA-COMP:10532"/>
        <dbReference type="Rhea" id="RHEA-COMP:14844"/>
        <dbReference type="ChEBI" id="CHEBI:15377"/>
        <dbReference type="ChEBI" id="CHEBI:15378"/>
        <dbReference type="ChEBI" id="CHEBI:29805"/>
        <dbReference type="ChEBI" id="CHEBI:29965"/>
        <dbReference type="ChEBI" id="CHEBI:141553"/>
        <dbReference type="EC" id="3.5.1.124"/>
    </reaction>
</comment>
<comment type="catalytic activity">
    <reaction evidence="1">
        <text>N(6)-(1-hydroxy-2-oxoethyl)-L-lysyl-[protein] + H2O = glycolate + L-lysyl-[protein] + H(+)</text>
        <dbReference type="Rhea" id="RHEA:57192"/>
        <dbReference type="Rhea" id="RHEA-COMP:9752"/>
        <dbReference type="Rhea" id="RHEA-COMP:14845"/>
        <dbReference type="ChEBI" id="CHEBI:15377"/>
        <dbReference type="ChEBI" id="CHEBI:15378"/>
        <dbReference type="ChEBI" id="CHEBI:29805"/>
        <dbReference type="ChEBI" id="CHEBI:29969"/>
        <dbReference type="ChEBI" id="CHEBI:141554"/>
        <dbReference type="EC" id="3.5.1.124"/>
    </reaction>
</comment>
<comment type="catalytic activity">
    <reaction evidence="1">
        <text>S-(1-hydroxy-2-oxoethyl)-L-cysteinyl-[protein] + H2O = glycolate + L-cysteinyl-[protein] + H(+)</text>
        <dbReference type="Rhea" id="RHEA:57196"/>
        <dbReference type="Rhea" id="RHEA-COMP:10131"/>
        <dbReference type="Rhea" id="RHEA-COMP:14846"/>
        <dbReference type="ChEBI" id="CHEBI:15377"/>
        <dbReference type="ChEBI" id="CHEBI:15378"/>
        <dbReference type="ChEBI" id="CHEBI:29805"/>
        <dbReference type="ChEBI" id="CHEBI:29950"/>
        <dbReference type="ChEBI" id="CHEBI:141555"/>
        <dbReference type="EC" id="3.5.1.124"/>
    </reaction>
</comment>
<comment type="catalytic activity">
    <reaction evidence="1">
        <text>N(2)-(1-hydroxy-2-oxopropyl)-dGTP + H2O = lactate + dGTP + H(+)</text>
        <dbReference type="Rhea" id="RHEA:57244"/>
        <dbReference type="ChEBI" id="CHEBI:15377"/>
        <dbReference type="ChEBI" id="CHEBI:15378"/>
        <dbReference type="ChEBI" id="CHEBI:24996"/>
        <dbReference type="ChEBI" id="CHEBI:61429"/>
        <dbReference type="ChEBI" id="CHEBI:141569"/>
    </reaction>
</comment>
<comment type="catalytic activity">
    <reaction evidence="1">
        <text>N(2)-(1-hydroxy-2-oxopropyl)-GTP + H2O = lactate + GTP + H(+)</text>
        <dbReference type="Rhea" id="RHEA:57256"/>
        <dbReference type="ChEBI" id="CHEBI:15377"/>
        <dbReference type="ChEBI" id="CHEBI:15378"/>
        <dbReference type="ChEBI" id="CHEBI:24996"/>
        <dbReference type="ChEBI" id="CHEBI:37565"/>
        <dbReference type="ChEBI" id="CHEBI:141570"/>
    </reaction>
</comment>
<comment type="catalytic activity">
    <reaction evidence="1">
        <text>N(2)-(1-hydroxy-2-oxopropyl)-GDP + H2O = lactate + GDP + H(+)</text>
        <dbReference type="Rhea" id="RHEA:57260"/>
        <dbReference type="ChEBI" id="CHEBI:15377"/>
        <dbReference type="ChEBI" id="CHEBI:15378"/>
        <dbReference type="ChEBI" id="CHEBI:24996"/>
        <dbReference type="ChEBI" id="CHEBI:58189"/>
        <dbReference type="ChEBI" id="CHEBI:141573"/>
    </reaction>
</comment>
<comment type="catalytic activity">
    <reaction evidence="1">
        <text>N(2)-(1-hydroxy-2-oxopropyl)-GMP + H2O = lactate + GMP + H(+)</text>
        <dbReference type="Rhea" id="RHEA:57268"/>
        <dbReference type="ChEBI" id="CHEBI:15377"/>
        <dbReference type="ChEBI" id="CHEBI:15378"/>
        <dbReference type="ChEBI" id="CHEBI:24996"/>
        <dbReference type="ChEBI" id="CHEBI:58115"/>
        <dbReference type="ChEBI" id="CHEBI:141575"/>
    </reaction>
</comment>
<comment type="catalytic activity">
    <reaction evidence="1">
        <text>N(2)-(1-hydroxy-2-oxoethyl)-dGTP + H2O = dGTP + glycolate + H(+)</text>
        <dbReference type="Rhea" id="RHEA:57248"/>
        <dbReference type="ChEBI" id="CHEBI:15377"/>
        <dbReference type="ChEBI" id="CHEBI:15378"/>
        <dbReference type="ChEBI" id="CHEBI:29805"/>
        <dbReference type="ChEBI" id="CHEBI:61429"/>
        <dbReference type="ChEBI" id="CHEBI:141572"/>
    </reaction>
</comment>
<comment type="catalytic activity">
    <reaction evidence="1">
        <text>N(2)-(1-hydroxy-2-oxoethyl)-GTP + H2O = glycolate + GTP + H(+)</text>
        <dbReference type="Rhea" id="RHEA:57252"/>
        <dbReference type="ChEBI" id="CHEBI:15377"/>
        <dbReference type="ChEBI" id="CHEBI:15378"/>
        <dbReference type="ChEBI" id="CHEBI:29805"/>
        <dbReference type="ChEBI" id="CHEBI:37565"/>
        <dbReference type="ChEBI" id="CHEBI:141571"/>
    </reaction>
</comment>
<comment type="catalytic activity">
    <reaction evidence="1">
        <text>N(2)-(1-hydroxy-2-oxoethyl)-GDP + H2O = glycolate + GDP + H(+)</text>
        <dbReference type="Rhea" id="RHEA:57264"/>
        <dbReference type="ChEBI" id="CHEBI:15377"/>
        <dbReference type="ChEBI" id="CHEBI:15378"/>
        <dbReference type="ChEBI" id="CHEBI:29805"/>
        <dbReference type="ChEBI" id="CHEBI:58189"/>
        <dbReference type="ChEBI" id="CHEBI:141574"/>
    </reaction>
</comment>
<comment type="catalytic activity">
    <reaction evidence="1">
        <text>N(2)-(1-hydroxy-2-oxoethyl)-GMP + H2O = glycolate + GMP + H(+)</text>
        <dbReference type="Rhea" id="RHEA:57304"/>
        <dbReference type="ChEBI" id="CHEBI:15377"/>
        <dbReference type="ChEBI" id="CHEBI:15378"/>
        <dbReference type="ChEBI" id="CHEBI:29805"/>
        <dbReference type="ChEBI" id="CHEBI:58115"/>
        <dbReference type="ChEBI" id="CHEBI:141576"/>
    </reaction>
</comment>
<comment type="catalytic activity">
    <reaction evidence="1">
        <text>an N(2)-(1-hydroxy-2-oxopropyl)-guanosine in RNA + H2O = a guanosine in RNA + lactate + H(+)</text>
        <dbReference type="Rhea" id="RHEA:57288"/>
        <dbReference type="Rhea" id="RHEA-COMP:14855"/>
        <dbReference type="Rhea" id="RHEA-COMP:14858"/>
        <dbReference type="ChEBI" id="CHEBI:15377"/>
        <dbReference type="ChEBI" id="CHEBI:15378"/>
        <dbReference type="ChEBI" id="CHEBI:24996"/>
        <dbReference type="ChEBI" id="CHEBI:74269"/>
        <dbReference type="ChEBI" id="CHEBI:141580"/>
    </reaction>
</comment>
<comment type="catalytic activity">
    <reaction evidence="1">
        <text>an N(2)-(1-hydroxy-2-oxopropyl)-2'-deoxyguanosine in DNA + H2O = a 2'-deoxyguanosine in DNA + lactate + H(+)</text>
        <dbReference type="Rhea" id="RHEA:57300"/>
        <dbReference type="Rhea" id="RHEA-COMP:11367"/>
        <dbReference type="Rhea" id="RHEA-COMP:14856"/>
        <dbReference type="ChEBI" id="CHEBI:15377"/>
        <dbReference type="ChEBI" id="CHEBI:15378"/>
        <dbReference type="ChEBI" id="CHEBI:24996"/>
        <dbReference type="ChEBI" id="CHEBI:85445"/>
        <dbReference type="ChEBI" id="CHEBI:141578"/>
    </reaction>
</comment>
<comment type="catalytic activity">
    <reaction evidence="1">
        <text>an N(2)-(1-hydroxy-2-oxoethyl)-guanosine in RNA + H2O = a guanosine in RNA + glycolate + H(+)</text>
        <dbReference type="Rhea" id="RHEA:57292"/>
        <dbReference type="Rhea" id="RHEA-COMP:14855"/>
        <dbReference type="Rhea" id="RHEA-COMP:14859"/>
        <dbReference type="ChEBI" id="CHEBI:15377"/>
        <dbReference type="ChEBI" id="CHEBI:15378"/>
        <dbReference type="ChEBI" id="CHEBI:29805"/>
        <dbReference type="ChEBI" id="CHEBI:74269"/>
        <dbReference type="ChEBI" id="CHEBI:141581"/>
    </reaction>
</comment>
<comment type="catalytic activity">
    <reaction evidence="1">
        <text>an N(2)-(1-hydroxy-2-oxoethyl)-2'-deoxyguanosine in DNA + H2O = a 2'-deoxyguanosine in DNA + glycolate + H(+)</text>
        <dbReference type="Rhea" id="RHEA:57296"/>
        <dbReference type="Rhea" id="RHEA-COMP:11367"/>
        <dbReference type="Rhea" id="RHEA-COMP:14857"/>
        <dbReference type="ChEBI" id="CHEBI:15377"/>
        <dbReference type="ChEBI" id="CHEBI:15378"/>
        <dbReference type="ChEBI" id="CHEBI:29805"/>
        <dbReference type="ChEBI" id="CHEBI:85445"/>
        <dbReference type="ChEBI" id="CHEBI:141579"/>
    </reaction>
</comment>
<comment type="subunit">
    <text evidence="1">Homodimer.</text>
</comment>
<comment type="subcellular location">
    <subcellularLocation>
        <location evidence="1">Cytoplasm</location>
    </subcellularLocation>
</comment>
<comment type="induction">
    <text evidence="1">By heat shock.</text>
</comment>
<comment type="similarity">
    <text evidence="1">Belongs to the peptidase C56 family. HchA subfamily.</text>
</comment>
<reference key="1">
    <citation type="journal article" date="2006" name="Mol. Microbiol.">
        <title>Role of pathogenicity island-associated integrases in the genome plasticity of uropathogenic Escherichia coli strain 536.</title>
        <authorList>
            <person name="Hochhut B."/>
            <person name="Wilde C."/>
            <person name="Balling G."/>
            <person name="Middendorf B."/>
            <person name="Dobrindt U."/>
            <person name="Brzuszkiewicz E."/>
            <person name="Gottschalk G."/>
            <person name="Carniel E."/>
            <person name="Hacker J."/>
        </authorList>
    </citation>
    <scope>NUCLEOTIDE SEQUENCE [LARGE SCALE GENOMIC DNA]</scope>
    <source>
        <strain>536 / UPEC</strain>
    </source>
</reference>
<evidence type="ECO:0000255" key="1">
    <source>
        <dbReference type="HAMAP-Rule" id="MF_01046"/>
    </source>
</evidence>
<accession>Q0TGM8</accession>
<feature type="chain" id="PRO_1000064277" description="Protein/nucleic acid deglycase HchA">
    <location>
        <begin position="1"/>
        <end position="283"/>
    </location>
</feature>
<feature type="active site" description="Nucleophile" evidence="1">
    <location>
        <position position="185"/>
    </location>
</feature>
<feature type="binding site" evidence="1">
    <location>
        <position position="86"/>
    </location>
    <ligand>
        <name>Zn(2+)</name>
        <dbReference type="ChEBI" id="CHEBI:29105"/>
    </ligand>
</feature>
<feature type="binding site" evidence="1">
    <location>
        <position position="91"/>
    </location>
    <ligand>
        <name>Zn(2+)</name>
        <dbReference type="ChEBI" id="CHEBI:29105"/>
    </ligand>
</feature>
<feature type="binding site" evidence="1">
    <location>
        <position position="123"/>
    </location>
    <ligand>
        <name>Zn(2+)</name>
        <dbReference type="ChEBI" id="CHEBI:29105"/>
    </ligand>
</feature>
<dbReference type="EC" id="3.1.2.-" evidence="1"/>
<dbReference type="EC" id="3.5.1.-" evidence="1"/>
<dbReference type="EC" id="3.5.1.124" evidence="1"/>
<dbReference type="EMBL" id="CP000247">
    <property type="protein sequence ID" value="ABG69901.1"/>
    <property type="molecule type" value="Genomic_DNA"/>
</dbReference>
<dbReference type="RefSeq" id="WP_000218217.1">
    <property type="nucleotide sequence ID" value="NC_008253.1"/>
</dbReference>
<dbReference type="SMR" id="Q0TGM8"/>
<dbReference type="MEROPS" id="C56.006"/>
<dbReference type="KEGG" id="ecp:ECP_1900"/>
<dbReference type="HOGENOM" id="CLU_066933_0_0_6"/>
<dbReference type="Proteomes" id="UP000009182">
    <property type="component" value="Chromosome"/>
</dbReference>
<dbReference type="GO" id="GO:0005737">
    <property type="term" value="C:cytoplasm"/>
    <property type="evidence" value="ECO:0007669"/>
    <property type="project" value="UniProtKB-SubCell"/>
</dbReference>
<dbReference type="GO" id="GO:0019172">
    <property type="term" value="F:glyoxalase III activity"/>
    <property type="evidence" value="ECO:0007669"/>
    <property type="project" value="TreeGrafter"/>
</dbReference>
<dbReference type="GO" id="GO:0036524">
    <property type="term" value="F:protein deglycase activity"/>
    <property type="evidence" value="ECO:0007669"/>
    <property type="project" value="UniProtKB-UniRule"/>
</dbReference>
<dbReference type="GO" id="GO:0016790">
    <property type="term" value="F:thiolester hydrolase activity"/>
    <property type="evidence" value="ECO:0007669"/>
    <property type="project" value="UniProtKB-UniRule"/>
</dbReference>
<dbReference type="GO" id="GO:0008270">
    <property type="term" value="F:zinc ion binding"/>
    <property type="evidence" value="ECO:0007669"/>
    <property type="project" value="UniProtKB-UniRule"/>
</dbReference>
<dbReference type="GO" id="GO:0006281">
    <property type="term" value="P:DNA repair"/>
    <property type="evidence" value="ECO:0007669"/>
    <property type="project" value="UniProtKB-UniRule"/>
</dbReference>
<dbReference type="GO" id="GO:0019243">
    <property type="term" value="P:methylglyoxal catabolic process to D-lactate via S-lactoyl-glutathione"/>
    <property type="evidence" value="ECO:0007669"/>
    <property type="project" value="TreeGrafter"/>
</dbReference>
<dbReference type="GO" id="GO:0030091">
    <property type="term" value="P:protein repair"/>
    <property type="evidence" value="ECO:0007669"/>
    <property type="project" value="UniProtKB-UniRule"/>
</dbReference>
<dbReference type="FunFam" id="3.40.50.880:FF:000026">
    <property type="entry name" value="Protein/nucleic acid deglycase HchA"/>
    <property type="match status" value="1"/>
</dbReference>
<dbReference type="Gene3D" id="3.40.50.880">
    <property type="match status" value="1"/>
</dbReference>
<dbReference type="HAMAP" id="MF_01046">
    <property type="entry name" value="Deglycase_HchA"/>
    <property type="match status" value="1"/>
</dbReference>
<dbReference type="InterPro" id="IPR029062">
    <property type="entry name" value="Class_I_gatase-like"/>
</dbReference>
<dbReference type="InterPro" id="IPR017283">
    <property type="entry name" value="HchA"/>
</dbReference>
<dbReference type="InterPro" id="IPR050325">
    <property type="entry name" value="Prot/Nucl_acid_deglycase"/>
</dbReference>
<dbReference type="NCBIfam" id="NF003168">
    <property type="entry name" value="PRK04155.1"/>
    <property type="match status" value="1"/>
</dbReference>
<dbReference type="PANTHER" id="PTHR48094">
    <property type="entry name" value="PROTEIN/NUCLEIC ACID DEGLYCASE DJ-1-RELATED"/>
    <property type="match status" value="1"/>
</dbReference>
<dbReference type="PANTHER" id="PTHR48094:SF20">
    <property type="entry name" value="PROTEIN_NUCLEIC ACID DEGLYCASE 1"/>
    <property type="match status" value="1"/>
</dbReference>
<dbReference type="PIRSF" id="PIRSF037798">
    <property type="entry name" value="Chaperone_HchA"/>
    <property type="match status" value="1"/>
</dbReference>
<dbReference type="SUPFAM" id="SSF52317">
    <property type="entry name" value="Class I glutamine amidotransferase-like"/>
    <property type="match status" value="1"/>
</dbReference>
<keyword id="KW-0963">Cytoplasm</keyword>
<keyword id="KW-0227">DNA damage</keyword>
<keyword id="KW-0234">DNA repair</keyword>
<keyword id="KW-0378">Hydrolase</keyword>
<keyword id="KW-0479">Metal-binding</keyword>
<keyword id="KW-0346">Stress response</keyword>
<keyword id="KW-0862">Zinc</keyword>